<proteinExistence type="evidence at protein level"/>
<organism>
    <name type="scientific">Bos taurus</name>
    <name type="common">Bovine</name>
    <dbReference type="NCBI Taxonomy" id="9913"/>
    <lineage>
        <taxon>Eukaryota</taxon>
        <taxon>Metazoa</taxon>
        <taxon>Chordata</taxon>
        <taxon>Craniata</taxon>
        <taxon>Vertebrata</taxon>
        <taxon>Euteleostomi</taxon>
        <taxon>Mammalia</taxon>
        <taxon>Eutheria</taxon>
        <taxon>Laurasiatheria</taxon>
        <taxon>Artiodactyla</taxon>
        <taxon>Ruminantia</taxon>
        <taxon>Pecora</taxon>
        <taxon>Bovidae</taxon>
        <taxon>Bovinae</taxon>
        <taxon>Bos</taxon>
    </lineage>
</organism>
<sequence length="319" mass="37007">MITLLFLLVVGAQAQHEWTYSEGVLDEKHWRLQYPDCGGTRQSPIDLKMKKVRYNPSLRALNLTGYGLRQGEFPMTNNGHTVQISLPSSMRMTTSDGSQYLAKQMHFHWGGDSSEISGSEHTVDGMRYIIEIHVVHYHSKYGSYEEAQNEPDGLAVLAALVEVKDYAENTYYSNFISHLEDIRYAGQSTVLRDLDIQDMLPGDLRYYYSYLGSLTTPSCTENVHWFVVADTVKLSKTQIEKLENSLLNHQNETIQNNYRSTQPLNHRVVEANFVSHPHQEYTLGSKLHFYLNNIDQNLEYLRRFIEQKITKRKKEKYWP</sequence>
<dbReference type="EC" id="4.2.1.1"/>
<dbReference type="EMBL" id="X96503">
    <property type="protein sequence ID" value="CAA65357.1"/>
    <property type="molecule type" value="mRNA"/>
</dbReference>
<dbReference type="PIR" id="S71877">
    <property type="entry name" value="S71877"/>
</dbReference>
<dbReference type="RefSeq" id="NP_776323.1">
    <property type="nucleotide sequence ID" value="NM_173898.2"/>
</dbReference>
<dbReference type="SMR" id="P18915"/>
<dbReference type="FunCoup" id="P18915">
    <property type="interactions" value="14"/>
</dbReference>
<dbReference type="STRING" id="9913.ENSBTAP00000012525"/>
<dbReference type="BindingDB" id="P18915"/>
<dbReference type="ChEMBL" id="CHEMBL2096971"/>
<dbReference type="DrugCentral" id="P18915"/>
<dbReference type="GlyCosmos" id="P18915">
    <property type="glycosylation" value="2 sites, No reported glycans"/>
</dbReference>
<dbReference type="GlyGen" id="P18915">
    <property type="glycosylation" value="2 sites"/>
</dbReference>
<dbReference type="PaxDb" id="9913-ENSBTAP00000012525"/>
<dbReference type="GeneID" id="280742"/>
<dbReference type="KEGG" id="bta:280742"/>
<dbReference type="CTD" id="765"/>
<dbReference type="eggNOG" id="KOG0382">
    <property type="taxonomic scope" value="Eukaryota"/>
</dbReference>
<dbReference type="InParanoid" id="P18915"/>
<dbReference type="OrthoDB" id="429145at2759"/>
<dbReference type="Proteomes" id="UP000009136">
    <property type="component" value="Unplaced"/>
</dbReference>
<dbReference type="GO" id="GO:0005615">
    <property type="term" value="C:extracellular space"/>
    <property type="evidence" value="ECO:0000318"/>
    <property type="project" value="GO_Central"/>
</dbReference>
<dbReference type="GO" id="GO:0004089">
    <property type="term" value="F:carbonate dehydratase activity"/>
    <property type="evidence" value="ECO:0000318"/>
    <property type="project" value="GO_Central"/>
</dbReference>
<dbReference type="GO" id="GO:0008270">
    <property type="term" value="F:zinc ion binding"/>
    <property type="evidence" value="ECO:0007669"/>
    <property type="project" value="InterPro"/>
</dbReference>
<dbReference type="FunFam" id="3.10.200.10:FF:000003">
    <property type="entry name" value="Carbonic anhydrase 12"/>
    <property type="match status" value="1"/>
</dbReference>
<dbReference type="Gene3D" id="3.10.200.10">
    <property type="entry name" value="Alpha carbonic anhydrase"/>
    <property type="match status" value="1"/>
</dbReference>
<dbReference type="InterPro" id="IPR001148">
    <property type="entry name" value="CA_dom"/>
</dbReference>
<dbReference type="InterPro" id="IPR036398">
    <property type="entry name" value="CA_dom_sf"/>
</dbReference>
<dbReference type="InterPro" id="IPR023561">
    <property type="entry name" value="Carbonic_anhydrase_a-class"/>
</dbReference>
<dbReference type="InterPro" id="IPR018338">
    <property type="entry name" value="Carbonic_anhydrase_a-class_CS"/>
</dbReference>
<dbReference type="PANTHER" id="PTHR18952">
    <property type="entry name" value="CARBONIC ANHYDRASE"/>
    <property type="match status" value="1"/>
</dbReference>
<dbReference type="PANTHER" id="PTHR18952:SF110">
    <property type="entry name" value="CARBONIC ANHYDRASE 6"/>
    <property type="match status" value="1"/>
</dbReference>
<dbReference type="Pfam" id="PF00194">
    <property type="entry name" value="Carb_anhydrase"/>
    <property type="match status" value="1"/>
</dbReference>
<dbReference type="SMART" id="SM01057">
    <property type="entry name" value="Carb_anhydrase"/>
    <property type="match status" value="1"/>
</dbReference>
<dbReference type="SUPFAM" id="SSF51069">
    <property type="entry name" value="Carbonic anhydrase"/>
    <property type="match status" value="1"/>
</dbReference>
<dbReference type="PROSITE" id="PS00162">
    <property type="entry name" value="ALPHA_CA_1"/>
    <property type="match status" value="1"/>
</dbReference>
<dbReference type="PROSITE" id="PS51144">
    <property type="entry name" value="ALPHA_CA_2"/>
    <property type="match status" value="1"/>
</dbReference>
<evidence type="ECO:0000250" key="1">
    <source>
        <dbReference type="UniProtKB" id="P00918"/>
    </source>
</evidence>
<evidence type="ECO:0000250" key="2">
    <source>
        <dbReference type="UniProtKB" id="P23280"/>
    </source>
</evidence>
<evidence type="ECO:0000250" key="3">
    <source>
        <dbReference type="UniProtKB" id="P23589"/>
    </source>
</evidence>
<evidence type="ECO:0000255" key="4"/>
<evidence type="ECO:0000255" key="5">
    <source>
        <dbReference type="PROSITE-ProRule" id="PRU01134"/>
    </source>
</evidence>
<evidence type="ECO:0000269" key="6">
    <source>
    </source>
</evidence>
<evidence type="ECO:0000305" key="7"/>
<feature type="signal peptide" evidence="6">
    <location>
        <begin position="1"/>
        <end position="14"/>
    </location>
</feature>
<feature type="chain" id="PRO_0000004239" description="Carbonic anhydrase 6">
    <location>
        <begin position="15"/>
        <end position="319"/>
    </location>
</feature>
<feature type="domain" description="Alpha-carbonic anhydrase" evidence="5">
    <location>
        <begin position="16"/>
        <end position="273"/>
    </location>
</feature>
<feature type="active site" description="Proton donor/acceptor" evidence="1">
    <location>
        <position position="80"/>
    </location>
</feature>
<feature type="binding site" evidence="2">
    <location>
        <position position="106"/>
    </location>
    <ligand>
        <name>Zn(2+)</name>
        <dbReference type="ChEBI" id="CHEBI:29105"/>
        <note>catalytic</note>
    </ligand>
</feature>
<feature type="binding site" evidence="2">
    <location>
        <position position="108"/>
    </location>
    <ligand>
        <name>Zn(2+)</name>
        <dbReference type="ChEBI" id="CHEBI:29105"/>
        <note>catalytic</note>
    </ligand>
</feature>
<feature type="binding site" evidence="2">
    <location>
        <position position="133"/>
    </location>
    <ligand>
        <name>Zn(2+)</name>
        <dbReference type="ChEBI" id="CHEBI:29105"/>
        <note>catalytic</note>
    </ligand>
</feature>
<feature type="binding site" evidence="1">
    <location>
        <begin position="215"/>
        <end position="216"/>
    </location>
    <ligand>
        <name>substrate</name>
    </ligand>
</feature>
<feature type="glycosylation site" description="N-linked (GlcNAc...) asparagine">
    <location>
        <position position="62"/>
    </location>
</feature>
<feature type="glycosylation site" description="N-linked (GlcNAc...) asparagine">
    <location>
        <position position="251"/>
    </location>
</feature>
<feature type="disulfide bond" evidence="4">
    <location>
        <begin position="37"/>
        <end position="219"/>
    </location>
</feature>
<feature type="sequence conflict" description="In Ref. 2; AA sequence." evidence="7" ref="2">
    <original>H</original>
    <variation>S</variation>
    <location>
        <position position="16"/>
    </location>
</feature>
<name>CAH6_BOVIN</name>
<reference key="1">
    <citation type="journal article" date="1996" name="Biochem. J.">
        <title>Sequence of bovine carbonic anhydrase VI: potential recognition sites for N-acetylgalactosaminyltransferase.</title>
        <authorList>
            <person name="Jiang W."/>
            <person name="Woitach J.T."/>
            <person name="Gupta D."/>
        </authorList>
    </citation>
    <scope>NUCLEOTIDE SEQUENCE [MRNA]</scope>
    <source>
        <tissue>Submandibular gland</tissue>
    </source>
</reference>
<reference key="2">
    <citation type="journal article" date="1989" name="Biochem. J.">
        <title>Tissue and species distribution of the secreted carbonic anhydrase isoenzyme.</title>
        <authorList>
            <person name="Fernley R.T."/>
            <person name="Darling P."/>
            <person name="Aldred P."/>
            <person name="Wright R.D."/>
            <person name="Coghlan J.P."/>
        </authorList>
    </citation>
    <scope>PROTEIN SEQUENCE OF 15-39</scope>
</reference>
<gene>
    <name type="primary">CA6</name>
</gene>
<protein>
    <recommendedName>
        <fullName>Carbonic anhydrase 6</fullName>
        <ecNumber>4.2.1.1</ecNumber>
    </recommendedName>
    <alternativeName>
        <fullName>Carbonate dehydratase VI</fullName>
    </alternativeName>
    <alternativeName>
        <fullName>Carbonic anhydrase VI</fullName>
        <shortName>CA-VI</shortName>
    </alternativeName>
    <alternativeName>
        <fullName>Salivary carbonic anhydrase</fullName>
    </alternativeName>
    <alternativeName>
        <fullName>Secreted carbonic anhydrase</fullName>
    </alternativeName>
</protein>
<comment type="function">
    <text>Reversible hydration of carbon dioxide. Its role in saliva is unknown.</text>
</comment>
<comment type="catalytic activity">
    <reaction>
        <text>hydrogencarbonate + H(+) = CO2 + H2O</text>
        <dbReference type="Rhea" id="RHEA:10748"/>
        <dbReference type="ChEBI" id="CHEBI:15377"/>
        <dbReference type="ChEBI" id="CHEBI:15378"/>
        <dbReference type="ChEBI" id="CHEBI:16526"/>
        <dbReference type="ChEBI" id="CHEBI:17544"/>
        <dbReference type="EC" id="4.2.1.1"/>
    </reaction>
</comment>
<comment type="cofactor">
    <cofactor evidence="3">
        <name>Zn(2+)</name>
        <dbReference type="ChEBI" id="CHEBI:29105"/>
    </cofactor>
</comment>
<comment type="subcellular location">
    <subcellularLocation>
        <location>Secreted</location>
    </subcellularLocation>
</comment>
<comment type="tissue specificity">
    <text>Major constituent of saliva.</text>
</comment>
<comment type="similarity">
    <text evidence="7">Belongs to the alpha-carbonic anhydrase family.</text>
</comment>
<keyword id="KW-0903">Direct protein sequencing</keyword>
<keyword id="KW-1015">Disulfide bond</keyword>
<keyword id="KW-0325">Glycoprotein</keyword>
<keyword id="KW-0456">Lyase</keyword>
<keyword id="KW-0479">Metal-binding</keyword>
<keyword id="KW-1185">Reference proteome</keyword>
<keyword id="KW-0964">Secreted</keyword>
<keyword id="KW-0732">Signal</keyword>
<keyword id="KW-0862">Zinc</keyword>
<accession>P18915</accession>
<accession>Q95322</accession>